<name>HIS7_MAGMM</name>
<gene>
    <name evidence="1" type="primary">hisB</name>
    <name type="ordered locus">Mmc1_2938</name>
</gene>
<comment type="catalytic activity">
    <reaction evidence="1">
        <text>D-erythro-1-(imidazol-4-yl)glycerol 3-phosphate = 3-(imidazol-4-yl)-2-oxopropyl phosphate + H2O</text>
        <dbReference type="Rhea" id="RHEA:11040"/>
        <dbReference type="ChEBI" id="CHEBI:15377"/>
        <dbReference type="ChEBI" id="CHEBI:57766"/>
        <dbReference type="ChEBI" id="CHEBI:58278"/>
        <dbReference type="EC" id="4.2.1.19"/>
    </reaction>
</comment>
<comment type="pathway">
    <text evidence="1">Amino-acid biosynthesis; L-histidine biosynthesis; L-histidine from 5-phospho-alpha-D-ribose 1-diphosphate: step 6/9.</text>
</comment>
<comment type="subcellular location">
    <subcellularLocation>
        <location evidence="1">Cytoplasm</location>
    </subcellularLocation>
</comment>
<comment type="similarity">
    <text evidence="1">Belongs to the imidazoleglycerol-phosphate dehydratase family.</text>
</comment>
<accession>A0LBT6</accession>
<proteinExistence type="inferred from homology"/>
<protein>
    <recommendedName>
        <fullName evidence="1">Imidazoleglycerol-phosphate dehydratase</fullName>
        <shortName evidence="1">IGPD</shortName>
        <ecNumber evidence="1">4.2.1.19</ecNumber>
    </recommendedName>
</protein>
<organism>
    <name type="scientific">Magnetococcus marinus (strain ATCC BAA-1437 / JCM 17883 / MC-1)</name>
    <dbReference type="NCBI Taxonomy" id="156889"/>
    <lineage>
        <taxon>Bacteria</taxon>
        <taxon>Pseudomonadati</taxon>
        <taxon>Pseudomonadota</taxon>
        <taxon>Alphaproteobacteria</taxon>
        <taxon>Magnetococcales</taxon>
        <taxon>Magnetococcaceae</taxon>
        <taxon>Magnetococcus</taxon>
    </lineage>
</organism>
<keyword id="KW-0028">Amino-acid biosynthesis</keyword>
<keyword id="KW-0963">Cytoplasm</keyword>
<keyword id="KW-0368">Histidine biosynthesis</keyword>
<keyword id="KW-0456">Lyase</keyword>
<keyword id="KW-1185">Reference proteome</keyword>
<evidence type="ECO:0000255" key="1">
    <source>
        <dbReference type="HAMAP-Rule" id="MF_00076"/>
    </source>
</evidence>
<dbReference type="EC" id="4.2.1.19" evidence="1"/>
<dbReference type="EMBL" id="CP000471">
    <property type="protein sequence ID" value="ABK45429.1"/>
    <property type="molecule type" value="Genomic_DNA"/>
</dbReference>
<dbReference type="RefSeq" id="WP_011714493.1">
    <property type="nucleotide sequence ID" value="NC_008576.1"/>
</dbReference>
<dbReference type="SMR" id="A0LBT6"/>
<dbReference type="STRING" id="156889.Mmc1_2938"/>
<dbReference type="KEGG" id="mgm:Mmc1_2938"/>
<dbReference type="eggNOG" id="COG0131">
    <property type="taxonomic scope" value="Bacteria"/>
</dbReference>
<dbReference type="HOGENOM" id="CLU_044308_3_0_5"/>
<dbReference type="OrthoDB" id="9813612at2"/>
<dbReference type="UniPathway" id="UPA00031">
    <property type="reaction ID" value="UER00011"/>
</dbReference>
<dbReference type="Proteomes" id="UP000002586">
    <property type="component" value="Chromosome"/>
</dbReference>
<dbReference type="GO" id="GO:0005737">
    <property type="term" value="C:cytoplasm"/>
    <property type="evidence" value="ECO:0007669"/>
    <property type="project" value="UniProtKB-SubCell"/>
</dbReference>
<dbReference type="GO" id="GO:0004424">
    <property type="term" value="F:imidazoleglycerol-phosphate dehydratase activity"/>
    <property type="evidence" value="ECO:0007669"/>
    <property type="project" value="UniProtKB-UniRule"/>
</dbReference>
<dbReference type="GO" id="GO:0000105">
    <property type="term" value="P:L-histidine biosynthetic process"/>
    <property type="evidence" value="ECO:0007669"/>
    <property type="project" value="UniProtKB-UniRule"/>
</dbReference>
<dbReference type="CDD" id="cd07914">
    <property type="entry name" value="IGPD"/>
    <property type="match status" value="1"/>
</dbReference>
<dbReference type="FunFam" id="3.30.230.40:FF:000001">
    <property type="entry name" value="Imidazoleglycerol-phosphate dehydratase HisB"/>
    <property type="match status" value="1"/>
</dbReference>
<dbReference type="FunFam" id="3.30.230.40:FF:000003">
    <property type="entry name" value="Imidazoleglycerol-phosphate dehydratase HisB"/>
    <property type="match status" value="1"/>
</dbReference>
<dbReference type="Gene3D" id="3.30.230.40">
    <property type="entry name" value="Imidazole glycerol phosphate dehydratase, domain 1"/>
    <property type="match status" value="2"/>
</dbReference>
<dbReference type="HAMAP" id="MF_00076">
    <property type="entry name" value="HisB"/>
    <property type="match status" value="1"/>
</dbReference>
<dbReference type="InterPro" id="IPR038494">
    <property type="entry name" value="IGPD_sf"/>
</dbReference>
<dbReference type="InterPro" id="IPR000807">
    <property type="entry name" value="ImidazoleglycerolP_deHydtase"/>
</dbReference>
<dbReference type="InterPro" id="IPR020565">
    <property type="entry name" value="ImidazoleglycerP_deHydtase_CS"/>
</dbReference>
<dbReference type="InterPro" id="IPR020568">
    <property type="entry name" value="Ribosomal_Su5_D2-typ_SF"/>
</dbReference>
<dbReference type="NCBIfam" id="NF002106">
    <property type="entry name" value="PRK00951.1-1"/>
    <property type="match status" value="1"/>
</dbReference>
<dbReference type="NCBIfam" id="NF002109">
    <property type="entry name" value="PRK00951.1-5"/>
    <property type="match status" value="1"/>
</dbReference>
<dbReference type="NCBIfam" id="NF002111">
    <property type="entry name" value="PRK00951.2-1"/>
    <property type="match status" value="1"/>
</dbReference>
<dbReference type="NCBIfam" id="NF002114">
    <property type="entry name" value="PRK00951.2-4"/>
    <property type="match status" value="1"/>
</dbReference>
<dbReference type="PANTHER" id="PTHR23133:SF2">
    <property type="entry name" value="IMIDAZOLEGLYCEROL-PHOSPHATE DEHYDRATASE"/>
    <property type="match status" value="1"/>
</dbReference>
<dbReference type="PANTHER" id="PTHR23133">
    <property type="entry name" value="IMIDAZOLEGLYCEROL-PHOSPHATE DEHYDRATASE HIS7"/>
    <property type="match status" value="1"/>
</dbReference>
<dbReference type="Pfam" id="PF00475">
    <property type="entry name" value="IGPD"/>
    <property type="match status" value="1"/>
</dbReference>
<dbReference type="SUPFAM" id="SSF54211">
    <property type="entry name" value="Ribosomal protein S5 domain 2-like"/>
    <property type="match status" value="2"/>
</dbReference>
<dbReference type="PROSITE" id="PS00954">
    <property type="entry name" value="IGP_DEHYDRATASE_1"/>
    <property type="match status" value="1"/>
</dbReference>
<dbReference type="PROSITE" id="PS00955">
    <property type="entry name" value="IGP_DEHYDRATASE_2"/>
    <property type="match status" value="1"/>
</dbReference>
<reference key="1">
    <citation type="journal article" date="2009" name="Appl. Environ. Microbiol.">
        <title>Complete genome sequence of the chemolithoautotrophic marine magnetotactic coccus strain MC-1.</title>
        <authorList>
            <person name="Schubbe S."/>
            <person name="Williams T.J."/>
            <person name="Xie G."/>
            <person name="Kiss H.E."/>
            <person name="Brettin T.S."/>
            <person name="Martinez D."/>
            <person name="Ross C.A."/>
            <person name="Schuler D."/>
            <person name="Cox B.L."/>
            <person name="Nealson K.H."/>
            <person name="Bazylinski D.A."/>
        </authorList>
    </citation>
    <scope>NUCLEOTIDE SEQUENCE [LARGE SCALE GENOMIC DNA]</scope>
    <source>
        <strain>ATCC BAA-1437 / JCM 17883 / MC-1</strain>
    </source>
</reference>
<feature type="chain" id="PRO_1000010290" description="Imidazoleglycerol-phosphate dehydratase">
    <location>
        <begin position="1"/>
        <end position="198"/>
    </location>
</feature>
<sequence>MARIATESRTTGETKIQVTLNLDGSGKAQVDTGVGFLDHMLDQIARHGGMDLEIEACGDQHIDDHHTVEDVGITMGQAFRQAIGDRRGITRFGHAYVPLDEALSRVVVDLSNRPSLSWRVKFPTQKVGNFDTELFKEWFAAFAQQGGITMHVESLYGENSHHIAESCFKALARALRSACAVDATLGGVAPSTKGTLSD</sequence>